<gene>
    <name evidence="1" type="primary">aat</name>
    <name type="ordered locus">PHZ_c1852</name>
</gene>
<organism>
    <name type="scientific">Phenylobacterium zucineum (strain HLK1)</name>
    <dbReference type="NCBI Taxonomy" id="450851"/>
    <lineage>
        <taxon>Bacteria</taxon>
        <taxon>Pseudomonadati</taxon>
        <taxon>Pseudomonadota</taxon>
        <taxon>Alphaproteobacteria</taxon>
        <taxon>Caulobacterales</taxon>
        <taxon>Caulobacteraceae</taxon>
        <taxon>Phenylobacterium</taxon>
    </lineage>
</organism>
<comment type="function">
    <text evidence="1">Functions in the N-end rule pathway of protein degradation where it conjugates Leu, Phe and, less efficiently, Met from aminoacyl-tRNAs to the N-termini of proteins containing an N-terminal arginine or lysine.</text>
</comment>
<comment type="catalytic activity">
    <reaction evidence="1">
        <text>N-terminal L-lysyl-[protein] + L-leucyl-tRNA(Leu) = N-terminal L-leucyl-L-lysyl-[protein] + tRNA(Leu) + H(+)</text>
        <dbReference type="Rhea" id="RHEA:12340"/>
        <dbReference type="Rhea" id="RHEA-COMP:9613"/>
        <dbReference type="Rhea" id="RHEA-COMP:9622"/>
        <dbReference type="Rhea" id="RHEA-COMP:12670"/>
        <dbReference type="Rhea" id="RHEA-COMP:12671"/>
        <dbReference type="ChEBI" id="CHEBI:15378"/>
        <dbReference type="ChEBI" id="CHEBI:65249"/>
        <dbReference type="ChEBI" id="CHEBI:78442"/>
        <dbReference type="ChEBI" id="CHEBI:78494"/>
        <dbReference type="ChEBI" id="CHEBI:133043"/>
        <dbReference type="EC" id="2.3.2.6"/>
    </reaction>
</comment>
<comment type="catalytic activity">
    <reaction evidence="1">
        <text>N-terminal L-arginyl-[protein] + L-leucyl-tRNA(Leu) = N-terminal L-leucyl-L-arginyl-[protein] + tRNA(Leu) + H(+)</text>
        <dbReference type="Rhea" id="RHEA:50416"/>
        <dbReference type="Rhea" id="RHEA-COMP:9613"/>
        <dbReference type="Rhea" id="RHEA-COMP:9622"/>
        <dbReference type="Rhea" id="RHEA-COMP:12672"/>
        <dbReference type="Rhea" id="RHEA-COMP:12673"/>
        <dbReference type="ChEBI" id="CHEBI:15378"/>
        <dbReference type="ChEBI" id="CHEBI:64719"/>
        <dbReference type="ChEBI" id="CHEBI:78442"/>
        <dbReference type="ChEBI" id="CHEBI:78494"/>
        <dbReference type="ChEBI" id="CHEBI:133044"/>
        <dbReference type="EC" id="2.3.2.6"/>
    </reaction>
</comment>
<comment type="catalytic activity">
    <reaction evidence="1">
        <text>L-phenylalanyl-tRNA(Phe) + an N-terminal L-alpha-aminoacyl-[protein] = an N-terminal L-phenylalanyl-L-alpha-aminoacyl-[protein] + tRNA(Phe)</text>
        <dbReference type="Rhea" id="RHEA:43632"/>
        <dbReference type="Rhea" id="RHEA-COMP:9668"/>
        <dbReference type="Rhea" id="RHEA-COMP:9699"/>
        <dbReference type="Rhea" id="RHEA-COMP:10636"/>
        <dbReference type="Rhea" id="RHEA-COMP:10637"/>
        <dbReference type="ChEBI" id="CHEBI:78442"/>
        <dbReference type="ChEBI" id="CHEBI:78531"/>
        <dbReference type="ChEBI" id="CHEBI:78597"/>
        <dbReference type="ChEBI" id="CHEBI:83561"/>
        <dbReference type="EC" id="2.3.2.6"/>
    </reaction>
</comment>
<comment type="subcellular location">
    <subcellularLocation>
        <location evidence="1">Cytoplasm</location>
    </subcellularLocation>
</comment>
<comment type="similarity">
    <text evidence="1">Belongs to the L/F-transferase family.</text>
</comment>
<sequence length="221" mass="24450">MAEFDARDLLDCYARGVFPMADAREDARVFLIDPERRGVIPLEAFHVPRRLARTVRGDPFEIRIDAAFHDVVLACAASGPGRTETWINRPIEQLYLELHELGFAHSVECWQGERLVGGLYGVSLQGAFFGESMFSRVRDASKVALVHLVARLIAGGFTLLDAQFMTEHLAQFGAREIPRREYHRRLDRALAAPADFYALGAAAPSADGAGRLALQLITQAS</sequence>
<evidence type="ECO:0000255" key="1">
    <source>
        <dbReference type="HAMAP-Rule" id="MF_00688"/>
    </source>
</evidence>
<dbReference type="EC" id="2.3.2.6" evidence="1"/>
<dbReference type="EMBL" id="CP000747">
    <property type="protein sequence ID" value="ACG78263.1"/>
    <property type="molecule type" value="Genomic_DNA"/>
</dbReference>
<dbReference type="RefSeq" id="WP_012522405.1">
    <property type="nucleotide sequence ID" value="NC_011144.1"/>
</dbReference>
<dbReference type="SMR" id="B4RCS6"/>
<dbReference type="STRING" id="450851.PHZ_c1852"/>
<dbReference type="KEGG" id="pzu:PHZ_c1852"/>
<dbReference type="eggNOG" id="COG2360">
    <property type="taxonomic scope" value="Bacteria"/>
</dbReference>
<dbReference type="HOGENOM" id="CLU_075045_1_1_5"/>
<dbReference type="OrthoDB" id="9790282at2"/>
<dbReference type="Proteomes" id="UP000001868">
    <property type="component" value="Chromosome"/>
</dbReference>
<dbReference type="GO" id="GO:0005737">
    <property type="term" value="C:cytoplasm"/>
    <property type="evidence" value="ECO:0007669"/>
    <property type="project" value="UniProtKB-SubCell"/>
</dbReference>
<dbReference type="GO" id="GO:0008914">
    <property type="term" value="F:leucyl-tRNA--protein transferase activity"/>
    <property type="evidence" value="ECO:0007669"/>
    <property type="project" value="UniProtKB-UniRule"/>
</dbReference>
<dbReference type="GO" id="GO:0030163">
    <property type="term" value="P:protein catabolic process"/>
    <property type="evidence" value="ECO:0007669"/>
    <property type="project" value="UniProtKB-UniRule"/>
</dbReference>
<dbReference type="FunFam" id="3.40.630.70:FF:000001">
    <property type="entry name" value="Leucyl/phenylalanyl-tRNA--protein transferase"/>
    <property type="match status" value="1"/>
</dbReference>
<dbReference type="Gene3D" id="3.40.630.70">
    <property type="entry name" value="Leucyl/phenylalanyl-tRNA-protein transferase, C-terminal domain"/>
    <property type="match status" value="1"/>
</dbReference>
<dbReference type="HAMAP" id="MF_00688">
    <property type="entry name" value="Leu_Phe_trans"/>
    <property type="match status" value="1"/>
</dbReference>
<dbReference type="InterPro" id="IPR016181">
    <property type="entry name" value="Acyl_CoA_acyltransferase"/>
</dbReference>
<dbReference type="InterPro" id="IPR004616">
    <property type="entry name" value="Leu/Phe-tRNA_Trfase"/>
</dbReference>
<dbReference type="InterPro" id="IPR042203">
    <property type="entry name" value="Leu/Phe-tRNA_Trfase_C"/>
</dbReference>
<dbReference type="NCBIfam" id="TIGR00667">
    <property type="entry name" value="aat"/>
    <property type="match status" value="1"/>
</dbReference>
<dbReference type="PANTHER" id="PTHR30098">
    <property type="entry name" value="LEUCYL/PHENYLALANYL-TRNA--PROTEIN TRANSFERASE"/>
    <property type="match status" value="1"/>
</dbReference>
<dbReference type="PANTHER" id="PTHR30098:SF2">
    <property type="entry name" value="LEUCYL_PHENYLALANYL-TRNA--PROTEIN TRANSFERASE"/>
    <property type="match status" value="1"/>
</dbReference>
<dbReference type="Pfam" id="PF03588">
    <property type="entry name" value="Leu_Phe_trans"/>
    <property type="match status" value="1"/>
</dbReference>
<dbReference type="SUPFAM" id="SSF55729">
    <property type="entry name" value="Acyl-CoA N-acyltransferases (Nat)"/>
    <property type="match status" value="1"/>
</dbReference>
<feature type="chain" id="PRO_1000131935" description="Leucyl/phenylalanyl-tRNA--protein transferase">
    <location>
        <begin position="1"/>
        <end position="221"/>
    </location>
</feature>
<accession>B4RCS6</accession>
<name>LFTR_PHEZH</name>
<protein>
    <recommendedName>
        <fullName evidence="1">Leucyl/phenylalanyl-tRNA--protein transferase</fullName>
        <ecNumber evidence="1">2.3.2.6</ecNumber>
    </recommendedName>
    <alternativeName>
        <fullName evidence="1">L/F-transferase</fullName>
    </alternativeName>
    <alternativeName>
        <fullName evidence="1">Leucyltransferase</fullName>
    </alternativeName>
    <alternativeName>
        <fullName evidence="1">Phenyalanyltransferase</fullName>
    </alternativeName>
</protein>
<keyword id="KW-0012">Acyltransferase</keyword>
<keyword id="KW-0963">Cytoplasm</keyword>
<keyword id="KW-1185">Reference proteome</keyword>
<keyword id="KW-0808">Transferase</keyword>
<proteinExistence type="inferred from homology"/>
<reference key="1">
    <citation type="journal article" date="2008" name="BMC Genomics">
        <title>Complete genome of Phenylobacterium zucineum - a novel facultative intracellular bacterium isolated from human erythroleukemia cell line K562.</title>
        <authorList>
            <person name="Luo Y."/>
            <person name="Xu X."/>
            <person name="Ding Z."/>
            <person name="Liu Z."/>
            <person name="Zhang B."/>
            <person name="Yan Z."/>
            <person name="Sun J."/>
            <person name="Hu S."/>
            <person name="Hu X."/>
        </authorList>
    </citation>
    <scope>NUCLEOTIDE SEQUENCE [LARGE SCALE GENOMIC DNA]</scope>
    <source>
        <strain>HLK1</strain>
    </source>
</reference>